<evidence type="ECO:0000255" key="1">
    <source>
        <dbReference type="HAMAP-Rule" id="MF_00293"/>
    </source>
</evidence>
<feature type="chain" id="PRO_0000207940" description="Protein PsbN">
    <location>
        <begin position="1"/>
        <end position="43"/>
    </location>
</feature>
<feature type="transmembrane region" description="Helical" evidence="1">
    <location>
        <begin position="5"/>
        <end position="27"/>
    </location>
</feature>
<dbReference type="EMBL" id="AY228468">
    <property type="protein sequence ID" value="AAO74058.1"/>
    <property type="molecule type" value="Genomic_DNA"/>
</dbReference>
<dbReference type="RefSeq" id="NP_817210.1">
    <property type="nucleotide sequence ID" value="NC_004677.2"/>
</dbReference>
<dbReference type="SMR" id="Q7GUC9"/>
<dbReference type="GeneID" id="806944"/>
<dbReference type="GO" id="GO:0009535">
    <property type="term" value="C:chloroplast thylakoid membrane"/>
    <property type="evidence" value="ECO:0007669"/>
    <property type="project" value="UniProtKB-SubCell"/>
</dbReference>
<dbReference type="GO" id="GO:0015979">
    <property type="term" value="P:photosynthesis"/>
    <property type="evidence" value="ECO:0007669"/>
    <property type="project" value="InterPro"/>
</dbReference>
<dbReference type="HAMAP" id="MF_00293">
    <property type="entry name" value="PSII_PsbN"/>
    <property type="match status" value="1"/>
</dbReference>
<dbReference type="InterPro" id="IPR003398">
    <property type="entry name" value="PSII_PsbN"/>
</dbReference>
<dbReference type="PANTHER" id="PTHR35326">
    <property type="entry name" value="PROTEIN PSBN"/>
    <property type="match status" value="1"/>
</dbReference>
<dbReference type="PANTHER" id="PTHR35326:SF3">
    <property type="entry name" value="PROTEIN PSBN"/>
    <property type="match status" value="1"/>
</dbReference>
<dbReference type="Pfam" id="PF02468">
    <property type="entry name" value="PsbN"/>
    <property type="match status" value="1"/>
</dbReference>
<protein>
    <recommendedName>
        <fullName evidence="1">Protein PsbN</fullName>
    </recommendedName>
</protein>
<reference key="1">
    <citation type="submission" date="2003-02" db="EMBL/GenBank/DDBJ databases">
        <title>Complete nucleotide sequence of Pinus koraiensis.</title>
        <authorList>
            <person name="Noh E.W."/>
            <person name="Lee J.S."/>
            <person name="Choi Y.I."/>
            <person name="Han M.S."/>
            <person name="Yi Y.S."/>
            <person name="Han S.U."/>
        </authorList>
    </citation>
    <scope>NUCLEOTIDE SEQUENCE [LARGE SCALE GENOMIC DNA]</scope>
    <source>
        <strain>KangWon16</strain>
    </source>
</reference>
<name>PSBN_PINKO</name>
<organism>
    <name type="scientific">Pinus koraiensis</name>
    <name type="common">Korean pine</name>
    <dbReference type="NCBI Taxonomy" id="88728"/>
    <lineage>
        <taxon>Eukaryota</taxon>
        <taxon>Viridiplantae</taxon>
        <taxon>Streptophyta</taxon>
        <taxon>Embryophyta</taxon>
        <taxon>Tracheophyta</taxon>
        <taxon>Spermatophyta</taxon>
        <taxon>Pinopsida</taxon>
        <taxon>Pinidae</taxon>
        <taxon>Conifers I</taxon>
        <taxon>Pinales</taxon>
        <taxon>Pinaceae</taxon>
        <taxon>Pinus</taxon>
        <taxon>Pinus subgen. Strobus</taxon>
    </lineage>
</organism>
<sequence>METATLVTISISCLLVSFTGYALYTAFGQPSKQLRDPFEDHED</sequence>
<proteinExistence type="inferred from homology"/>
<accession>Q7GUC9</accession>
<geneLocation type="chloroplast"/>
<comment type="function">
    <text evidence="1">May play a role in photosystem I and II biogenesis.</text>
</comment>
<comment type="subcellular location">
    <subcellularLocation>
        <location evidence="1">Plastid</location>
        <location evidence="1">Chloroplast thylakoid membrane</location>
        <topology evidence="1">Single-pass membrane protein</topology>
    </subcellularLocation>
</comment>
<comment type="similarity">
    <text evidence="1">Belongs to the PsbN family.</text>
</comment>
<comment type="caution">
    <text evidence="1">Originally thought to be a component of PSII; based on experiments in Synechocystis, N.tabacum and barley, and its absence from PSII in T.elongatus and T.vulcanus, this is probably not true.</text>
</comment>
<gene>
    <name evidence="1" type="primary">psbN</name>
</gene>
<keyword id="KW-0150">Chloroplast</keyword>
<keyword id="KW-0472">Membrane</keyword>
<keyword id="KW-0934">Plastid</keyword>
<keyword id="KW-0793">Thylakoid</keyword>
<keyword id="KW-0812">Transmembrane</keyword>
<keyword id="KW-1133">Transmembrane helix</keyword>